<evidence type="ECO:0000255" key="1">
    <source>
        <dbReference type="HAMAP-Rule" id="MF_00762"/>
    </source>
</evidence>
<name>Y3037_PECAS</name>
<accession>Q6D2Q8</accession>
<sequence>MEMTNAQRLILSNQYKMMTMLDPDNAERYRRLQTIIERGYGLQMRELDREFGELTEEVCRTIINVMEMHHALQVSWTNLKDKQDLDERRLTFLGFDAATEARYLGFVRFMVHVEGRYPHFDAGTHGFNAQTKMWEKYTRMLAVWQSCPRQYHLSAVEIAQIINA</sequence>
<gene>
    <name type="ordered locus">ECA3037</name>
</gene>
<organism>
    <name type="scientific">Pectobacterium atrosepticum (strain SCRI 1043 / ATCC BAA-672)</name>
    <name type="common">Erwinia carotovora subsp. atroseptica</name>
    <dbReference type="NCBI Taxonomy" id="218491"/>
    <lineage>
        <taxon>Bacteria</taxon>
        <taxon>Pseudomonadati</taxon>
        <taxon>Pseudomonadota</taxon>
        <taxon>Gammaproteobacteria</taxon>
        <taxon>Enterobacterales</taxon>
        <taxon>Pectobacteriaceae</taxon>
        <taxon>Pectobacterium</taxon>
    </lineage>
</organism>
<protein>
    <recommendedName>
        <fullName evidence="1">UPF0304 protein ECA3037</fullName>
    </recommendedName>
</protein>
<reference key="1">
    <citation type="journal article" date="2004" name="Proc. Natl. Acad. Sci. U.S.A.">
        <title>Genome sequence of the enterobacterial phytopathogen Erwinia carotovora subsp. atroseptica and characterization of virulence factors.</title>
        <authorList>
            <person name="Bell K.S."/>
            <person name="Sebaihia M."/>
            <person name="Pritchard L."/>
            <person name="Holden M.T.G."/>
            <person name="Hyman L.J."/>
            <person name="Holeva M.C."/>
            <person name="Thomson N.R."/>
            <person name="Bentley S.D."/>
            <person name="Churcher L.J.C."/>
            <person name="Mungall K."/>
            <person name="Atkin R."/>
            <person name="Bason N."/>
            <person name="Brooks K."/>
            <person name="Chillingworth T."/>
            <person name="Clark K."/>
            <person name="Doggett J."/>
            <person name="Fraser A."/>
            <person name="Hance Z."/>
            <person name="Hauser H."/>
            <person name="Jagels K."/>
            <person name="Moule S."/>
            <person name="Norbertczak H."/>
            <person name="Ormond D."/>
            <person name="Price C."/>
            <person name="Quail M.A."/>
            <person name="Sanders M."/>
            <person name="Walker D."/>
            <person name="Whitehead S."/>
            <person name="Salmond G.P.C."/>
            <person name="Birch P.R.J."/>
            <person name="Parkhill J."/>
            <person name="Toth I.K."/>
        </authorList>
    </citation>
    <scope>NUCLEOTIDE SEQUENCE [LARGE SCALE GENOMIC DNA]</scope>
    <source>
        <strain>SCRI 1043 / ATCC BAA-672</strain>
    </source>
</reference>
<dbReference type="EMBL" id="BX950851">
    <property type="protein sequence ID" value="CAG75936.1"/>
    <property type="molecule type" value="Genomic_DNA"/>
</dbReference>
<dbReference type="RefSeq" id="WP_011094562.1">
    <property type="nucleotide sequence ID" value="NC_004547.2"/>
</dbReference>
<dbReference type="SMR" id="Q6D2Q8"/>
<dbReference type="STRING" id="218491.ECA3037"/>
<dbReference type="KEGG" id="eca:ECA3037"/>
<dbReference type="PATRIC" id="fig|218491.5.peg.3068"/>
<dbReference type="eggNOG" id="COG3013">
    <property type="taxonomic scope" value="Bacteria"/>
</dbReference>
<dbReference type="HOGENOM" id="CLU_101021_1_0_6"/>
<dbReference type="OrthoDB" id="5589463at2"/>
<dbReference type="Proteomes" id="UP000007966">
    <property type="component" value="Chromosome"/>
</dbReference>
<dbReference type="Gene3D" id="1.10.287.680">
    <property type="entry name" value="Helix hairpin bin"/>
    <property type="match status" value="1"/>
</dbReference>
<dbReference type="Gene3D" id="1.10.3190.10">
    <property type="entry name" value="yfbu gene product, domain 2"/>
    <property type="match status" value="1"/>
</dbReference>
<dbReference type="HAMAP" id="MF_00762">
    <property type="entry name" value="UPF0304"/>
    <property type="match status" value="1"/>
</dbReference>
<dbReference type="InterPro" id="IPR005587">
    <property type="entry name" value="UPF0304_YfbU"/>
</dbReference>
<dbReference type="InterPro" id="IPR023146">
    <property type="entry name" value="YfbU_alpha-helical_sf"/>
</dbReference>
<dbReference type="InterPro" id="IPR023145">
    <property type="entry name" value="YfbU_helix-hairpin_sf"/>
</dbReference>
<dbReference type="NCBIfam" id="NF003936">
    <property type="entry name" value="PRK05445.1"/>
    <property type="match status" value="1"/>
</dbReference>
<dbReference type="Pfam" id="PF03887">
    <property type="entry name" value="YfbU"/>
    <property type="match status" value="1"/>
</dbReference>
<dbReference type="PIRSF" id="PIRSF006272">
    <property type="entry name" value="UCP006272"/>
    <property type="match status" value="1"/>
</dbReference>
<dbReference type="SUPFAM" id="SSF116960">
    <property type="entry name" value="YfbU-like"/>
    <property type="match status" value="1"/>
</dbReference>
<proteinExistence type="inferred from homology"/>
<feature type="chain" id="PRO_0000218165" description="UPF0304 protein ECA3037">
    <location>
        <begin position="1"/>
        <end position="164"/>
    </location>
</feature>
<comment type="similarity">
    <text evidence="1">Belongs to the UPF0304 family.</text>
</comment>
<keyword id="KW-1185">Reference proteome</keyword>